<reference key="1">
    <citation type="journal article" date="2011" name="MBio">
        <title>Novel metabolic attributes of the genus Cyanothece, comprising a group of unicellular nitrogen-fixing Cyanobacteria.</title>
        <authorList>
            <person name="Bandyopadhyay A."/>
            <person name="Elvitigala T."/>
            <person name="Welsh E."/>
            <person name="Stockel J."/>
            <person name="Liberton M."/>
            <person name="Min H."/>
            <person name="Sherman L.A."/>
            <person name="Pakrasi H.B."/>
        </authorList>
    </citation>
    <scope>NUCLEOTIDE SEQUENCE [LARGE SCALE GENOMIC DNA]</scope>
    <source>
        <strain>PCC 7424</strain>
    </source>
</reference>
<gene>
    <name evidence="1" type="primary">hisA</name>
    <name type="ordered locus">PCC7424_4950</name>
</gene>
<organism>
    <name type="scientific">Gloeothece citriformis (strain PCC 7424)</name>
    <name type="common">Cyanothece sp. (strain PCC 7424)</name>
    <dbReference type="NCBI Taxonomy" id="65393"/>
    <lineage>
        <taxon>Bacteria</taxon>
        <taxon>Bacillati</taxon>
        <taxon>Cyanobacteriota</taxon>
        <taxon>Cyanophyceae</taxon>
        <taxon>Oscillatoriophycideae</taxon>
        <taxon>Chroococcales</taxon>
        <taxon>Aphanothecaceae</taxon>
        <taxon>Gloeothece</taxon>
        <taxon>Gloeothece citriformis</taxon>
    </lineage>
</organism>
<accession>B7KEI6</accession>
<feature type="chain" id="PRO_1000135099" description="1-(5-phosphoribosyl)-5-[(5-phosphoribosylamino)methylideneamino] imidazole-4-carboxamide isomerase">
    <location>
        <begin position="1"/>
        <end position="257"/>
    </location>
</feature>
<feature type="active site" description="Proton acceptor" evidence="1">
    <location>
        <position position="8"/>
    </location>
</feature>
<feature type="active site" description="Proton donor" evidence="1">
    <location>
        <position position="129"/>
    </location>
</feature>
<proteinExistence type="inferred from homology"/>
<keyword id="KW-0028">Amino-acid biosynthesis</keyword>
<keyword id="KW-0963">Cytoplasm</keyword>
<keyword id="KW-0368">Histidine biosynthesis</keyword>
<keyword id="KW-0413">Isomerase</keyword>
<keyword id="KW-1185">Reference proteome</keyword>
<name>HIS4_GLOC7</name>
<protein>
    <recommendedName>
        <fullName evidence="1">1-(5-phosphoribosyl)-5-[(5-phosphoribosylamino)methylideneamino] imidazole-4-carboxamide isomerase</fullName>
        <ecNumber evidence="1">5.3.1.16</ecNumber>
    </recommendedName>
    <alternativeName>
        <fullName evidence="1">Phosphoribosylformimino-5-aminoimidazole carboxamide ribotide isomerase</fullName>
    </alternativeName>
</protein>
<dbReference type="EC" id="5.3.1.16" evidence="1"/>
<dbReference type="EMBL" id="CP001291">
    <property type="protein sequence ID" value="ACK73304.1"/>
    <property type="molecule type" value="Genomic_DNA"/>
</dbReference>
<dbReference type="RefSeq" id="WP_015956885.1">
    <property type="nucleotide sequence ID" value="NC_011729.1"/>
</dbReference>
<dbReference type="SMR" id="B7KEI6"/>
<dbReference type="STRING" id="65393.PCC7424_4950"/>
<dbReference type="KEGG" id="cyc:PCC7424_4950"/>
<dbReference type="eggNOG" id="COG0106">
    <property type="taxonomic scope" value="Bacteria"/>
</dbReference>
<dbReference type="HOGENOM" id="CLU_048577_1_1_3"/>
<dbReference type="OrthoDB" id="9807749at2"/>
<dbReference type="UniPathway" id="UPA00031">
    <property type="reaction ID" value="UER00009"/>
</dbReference>
<dbReference type="Proteomes" id="UP000002384">
    <property type="component" value="Chromosome"/>
</dbReference>
<dbReference type="GO" id="GO:0005737">
    <property type="term" value="C:cytoplasm"/>
    <property type="evidence" value="ECO:0007669"/>
    <property type="project" value="UniProtKB-SubCell"/>
</dbReference>
<dbReference type="GO" id="GO:0003949">
    <property type="term" value="F:1-(5-phosphoribosyl)-5-[(5-phosphoribosylamino)methylideneamino]imidazole-4-carboxamide isomerase activity"/>
    <property type="evidence" value="ECO:0007669"/>
    <property type="project" value="UniProtKB-UniRule"/>
</dbReference>
<dbReference type="GO" id="GO:0000105">
    <property type="term" value="P:L-histidine biosynthetic process"/>
    <property type="evidence" value="ECO:0007669"/>
    <property type="project" value="UniProtKB-UniRule"/>
</dbReference>
<dbReference type="GO" id="GO:0000162">
    <property type="term" value="P:L-tryptophan biosynthetic process"/>
    <property type="evidence" value="ECO:0007669"/>
    <property type="project" value="TreeGrafter"/>
</dbReference>
<dbReference type="CDD" id="cd04732">
    <property type="entry name" value="HisA"/>
    <property type="match status" value="1"/>
</dbReference>
<dbReference type="FunFam" id="3.20.20.70:FF:000009">
    <property type="entry name" value="1-(5-phosphoribosyl)-5-[(5-phosphoribosylamino)methylideneamino] imidazole-4-carboxamide isomerase"/>
    <property type="match status" value="1"/>
</dbReference>
<dbReference type="Gene3D" id="3.20.20.70">
    <property type="entry name" value="Aldolase class I"/>
    <property type="match status" value="1"/>
</dbReference>
<dbReference type="HAMAP" id="MF_01014">
    <property type="entry name" value="HisA"/>
    <property type="match status" value="1"/>
</dbReference>
<dbReference type="InterPro" id="IPR013785">
    <property type="entry name" value="Aldolase_TIM"/>
</dbReference>
<dbReference type="InterPro" id="IPR006062">
    <property type="entry name" value="His_biosynth"/>
</dbReference>
<dbReference type="InterPro" id="IPR006063">
    <property type="entry name" value="HisA_bact_arch"/>
</dbReference>
<dbReference type="InterPro" id="IPR044524">
    <property type="entry name" value="Isoase_HisA-like"/>
</dbReference>
<dbReference type="InterPro" id="IPR023016">
    <property type="entry name" value="Isoase_HisA-like_bact"/>
</dbReference>
<dbReference type="InterPro" id="IPR011060">
    <property type="entry name" value="RibuloseP-bd_barrel"/>
</dbReference>
<dbReference type="NCBIfam" id="TIGR00007">
    <property type="entry name" value="1-(5-phosphoribosyl)-5-[(5-phosphoribosylamino)methylideneamino]imidazole-4-carboxamide isomerase"/>
    <property type="match status" value="1"/>
</dbReference>
<dbReference type="NCBIfam" id="NF010112">
    <property type="entry name" value="PRK13585.1"/>
    <property type="match status" value="1"/>
</dbReference>
<dbReference type="PANTHER" id="PTHR43090">
    <property type="entry name" value="1-(5-PHOSPHORIBOSYL)-5-[(5-PHOSPHORIBOSYLAMINO)METHYLIDENEAMINO] IMIDAZOLE-4-CARBOXAMIDE ISOMERASE"/>
    <property type="match status" value="1"/>
</dbReference>
<dbReference type="PANTHER" id="PTHR43090:SF2">
    <property type="entry name" value="1-(5-PHOSPHORIBOSYL)-5-[(5-PHOSPHORIBOSYLAMINO)METHYLIDENEAMINO] IMIDAZOLE-4-CARBOXAMIDE ISOMERASE"/>
    <property type="match status" value="1"/>
</dbReference>
<dbReference type="Pfam" id="PF00977">
    <property type="entry name" value="His_biosynth"/>
    <property type="match status" value="1"/>
</dbReference>
<dbReference type="SUPFAM" id="SSF51366">
    <property type="entry name" value="Ribulose-phoshate binding barrel"/>
    <property type="match status" value="1"/>
</dbReference>
<comment type="catalytic activity">
    <reaction evidence="1">
        <text>1-(5-phospho-beta-D-ribosyl)-5-[(5-phospho-beta-D-ribosylamino)methylideneamino]imidazole-4-carboxamide = 5-[(5-phospho-1-deoxy-D-ribulos-1-ylimino)methylamino]-1-(5-phospho-beta-D-ribosyl)imidazole-4-carboxamide</text>
        <dbReference type="Rhea" id="RHEA:15469"/>
        <dbReference type="ChEBI" id="CHEBI:58435"/>
        <dbReference type="ChEBI" id="CHEBI:58525"/>
        <dbReference type="EC" id="5.3.1.16"/>
    </reaction>
</comment>
<comment type="pathway">
    <text evidence="1">Amino-acid biosynthesis; L-histidine biosynthesis; L-histidine from 5-phospho-alpha-D-ribose 1-diphosphate: step 4/9.</text>
</comment>
<comment type="subcellular location">
    <subcellularLocation>
        <location evidence="1">Cytoplasm</location>
    </subcellularLocation>
</comment>
<comment type="similarity">
    <text evidence="1">Belongs to the HisA/HisF family.</text>
</comment>
<evidence type="ECO:0000255" key="1">
    <source>
        <dbReference type="HAMAP-Rule" id="MF_01014"/>
    </source>
</evidence>
<sequence length="257" mass="27164">MEVIPAIDLLDGRCVRLYQGDYQQSQVFSENPVEVARQWVEQGANRLHLVDLDGAKAGKPVNLSAIEAIVRAVSIPVQVGGGLRDRSSVAQLLNLGVNRVILGTIAVENPQLVQQLSQEFPGQIVVGIDAREGKVATRGWLETSEVQATELAQNMAHLGVAAIIYTDIHRDGTLKGPNIPALRELATAVNVPVIASGGVSSLTDLLSLLALEPSGVTGVIVGRALYTGEVDLSEAIQAVGQGRWQDIPPDLGSSAFA</sequence>